<keyword id="KW-0021">Allosteric enzyme</keyword>
<keyword id="KW-0289">Folate biosynthesis</keyword>
<keyword id="KW-0342">GTP-binding</keyword>
<keyword id="KW-0378">Hydrolase</keyword>
<keyword id="KW-0479">Metal-binding</keyword>
<keyword id="KW-0547">Nucleotide-binding</keyword>
<keyword id="KW-0597">Phosphoprotein</keyword>
<keyword id="KW-1185">Reference proteome</keyword>
<keyword id="KW-0862">Zinc</keyword>
<dbReference type="EC" id="3.5.4.16" evidence="8"/>
<dbReference type="EMBL" id="Z47201">
    <property type="protein sequence ID" value="CAA87397.1"/>
    <property type="molecule type" value="Genomic_DNA"/>
</dbReference>
<dbReference type="EMBL" id="X94314">
    <property type="protein sequence ID" value="CAA63975.1"/>
    <property type="molecule type" value="Genomic_DNA"/>
</dbReference>
<dbReference type="EMBL" id="Y07893">
    <property type="protein sequence ID" value="CAA69198.1"/>
    <property type="molecule type" value="Genomic_DNA"/>
</dbReference>
<dbReference type="EMBL" id="Z73052">
    <property type="protein sequence ID" value="CAA97297.1"/>
    <property type="molecule type" value="Genomic_DNA"/>
</dbReference>
<dbReference type="EMBL" id="AY692993">
    <property type="protein sequence ID" value="AAT93012.1"/>
    <property type="molecule type" value="Genomic_DNA"/>
</dbReference>
<dbReference type="EMBL" id="Z49756">
    <property type="protein sequence ID" value="CAA89826.1"/>
    <property type="molecule type" value="mRNA"/>
</dbReference>
<dbReference type="EMBL" id="BK006941">
    <property type="protein sequence ID" value="DAA08356.1"/>
    <property type="molecule type" value="Genomic_DNA"/>
</dbReference>
<dbReference type="PIR" id="JC4585">
    <property type="entry name" value="JC4585"/>
</dbReference>
<dbReference type="RefSeq" id="NP_011783.1">
    <property type="nucleotide sequence ID" value="NM_001181396.1"/>
</dbReference>
<dbReference type="SMR" id="P51601"/>
<dbReference type="BioGRID" id="33517">
    <property type="interactions" value="62"/>
</dbReference>
<dbReference type="DIP" id="DIP-1318N"/>
<dbReference type="FunCoup" id="P51601">
    <property type="interactions" value="485"/>
</dbReference>
<dbReference type="IntAct" id="P51601">
    <property type="interactions" value="18"/>
</dbReference>
<dbReference type="MINT" id="P51601"/>
<dbReference type="STRING" id="4932.YGR267C"/>
<dbReference type="GlyGen" id="P51601">
    <property type="glycosylation" value="1 site"/>
</dbReference>
<dbReference type="iPTMnet" id="P51601"/>
<dbReference type="PaxDb" id="4932-YGR267C"/>
<dbReference type="PeptideAtlas" id="P51601"/>
<dbReference type="EnsemblFungi" id="YGR267C_mRNA">
    <property type="protein sequence ID" value="YGR267C"/>
    <property type="gene ID" value="YGR267C"/>
</dbReference>
<dbReference type="GeneID" id="853183"/>
<dbReference type="KEGG" id="sce:YGR267C"/>
<dbReference type="AGR" id="SGD:S000003499"/>
<dbReference type="SGD" id="S000003499">
    <property type="gene designation" value="FOL2"/>
</dbReference>
<dbReference type="VEuPathDB" id="FungiDB:YGR267C"/>
<dbReference type="eggNOG" id="KOG2698">
    <property type="taxonomic scope" value="Eukaryota"/>
</dbReference>
<dbReference type="GeneTree" id="ENSGT00390000013481"/>
<dbReference type="HOGENOM" id="CLU_049768_1_3_1"/>
<dbReference type="InParanoid" id="P51601"/>
<dbReference type="OMA" id="CEHMCMS"/>
<dbReference type="OrthoDB" id="4966at2759"/>
<dbReference type="BioCyc" id="YEAST:YGR267C-MONOMER"/>
<dbReference type="Reactome" id="R-SCE-1474151">
    <property type="pathway name" value="Tetrahydrobiopterin (BH4) synthesis, recycling, salvage and regulation"/>
</dbReference>
<dbReference type="UniPathway" id="UPA00848">
    <property type="reaction ID" value="UER00151"/>
</dbReference>
<dbReference type="BioGRID-ORCS" id="853183">
    <property type="hits" value="7 hits in 10 CRISPR screens"/>
</dbReference>
<dbReference type="PRO" id="PR:P51601"/>
<dbReference type="Proteomes" id="UP000002311">
    <property type="component" value="Chromosome VII"/>
</dbReference>
<dbReference type="RNAct" id="P51601">
    <property type="molecule type" value="protein"/>
</dbReference>
<dbReference type="GO" id="GO:0005737">
    <property type="term" value="C:cytoplasm"/>
    <property type="evidence" value="ECO:0007005"/>
    <property type="project" value="SGD"/>
</dbReference>
<dbReference type="GO" id="GO:0005634">
    <property type="term" value="C:nucleus"/>
    <property type="evidence" value="ECO:0000314"/>
    <property type="project" value="SGD"/>
</dbReference>
<dbReference type="GO" id="GO:0005525">
    <property type="term" value="F:GTP binding"/>
    <property type="evidence" value="ECO:0000318"/>
    <property type="project" value="GO_Central"/>
</dbReference>
<dbReference type="GO" id="GO:0003934">
    <property type="term" value="F:GTP cyclohydrolase I activity"/>
    <property type="evidence" value="ECO:0000315"/>
    <property type="project" value="SGD"/>
</dbReference>
<dbReference type="GO" id="GO:0008270">
    <property type="term" value="F:zinc ion binding"/>
    <property type="evidence" value="ECO:0000318"/>
    <property type="project" value="GO_Central"/>
</dbReference>
<dbReference type="GO" id="GO:0046656">
    <property type="term" value="P:folic acid biosynthetic process"/>
    <property type="evidence" value="ECO:0007669"/>
    <property type="project" value="UniProtKB-KW"/>
</dbReference>
<dbReference type="GO" id="GO:0009396">
    <property type="term" value="P:folic acid-containing compound biosynthetic process"/>
    <property type="evidence" value="ECO:0000315"/>
    <property type="project" value="SGD"/>
</dbReference>
<dbReference type="GO" id="GO:0006729">
    <property type="term" value="P:tetrahydrobiopterin biosynthetic process"/>
    <property type="evidence" value="ECO:0000318"/>
    <property type="project" value="GO_Central"/>
</dbReference>
<dbReference type="GO" id="GO:0046654">
    <property type="term" value="P:tetrahydrofolate biosynthetic process"/>
    <property type="evidence" value="ECO:0007669"/>
    <property type="project" value="InterPro"/>
</dbReference>
<dbReference type="CDD" id="cd00642">
    <property type="entry name" value="GTP_cyclohydro1"/>
    <property type="match status" value="1"/>
</dbReference>
<dbReference type="FunFam" id="1.10.286.10:FF:000003">
    <property type="entry name" value="GTP cyclohydrolase 1"/>
    <property type="match status" value="1"/>
</dbReference>
<dbReference type="FunFam" id="3.30.1130.10:FF:000012">
    <property type="entry name" value="GTP cyclohydrolase 1"/>
    <property type="match status" value="1"/>
</dbReference>
<dbReference type="Gene3D" id="1.10.286.10">
    <property type="match status" value="1"/>
</dbReference>
<dbReference type="Gene3D" id="3.30.1130.10">
    <property type="match status" value="1"/>
</dbReference>
<dbReference type="HAMAP" id="MF_00223">
    <property type="entry name" value="FolE"/>
    <property type="match status" value="1"/>
</dbReference>
<dbReference type="InterPro" id="IPR043133">
    <property type="entry name" value="GTP-CH-I_C/QueF"/>
</dbReference>
<dbReference type="InterPro" id="IPR043134">
    <property type="entry name" value="GTP-CH-I_N"/>
</dbReference>
<dbReference type="InterPro" id="IPR001474">
    <property type="entry name" value="GTP_CycHdrlase_I"/>
</dbReference>
<dbReference type="InterPro" id="IPR018234">
    <property type="entry name" value="GTP_CycHdrlase_I_CS"/>
</dbReference>
<dbReference type="InterPro" id="IPR020602">
    <property type="entry name" value="GTP_CycHdrlase_I_dom"/>
</dbReference>
<dbReference type="NCBIfam" id="TIGR00063">
    <property type="entry name" value="folE"/>
    <property type="match status" value="1"/>
</dbReference>
<dbReference type="NCBIfam" id="NF006825">
    <property type="entry name" value="PRK09347.1-2"/>
    <property type="match status" value="1"/>
</dbReference>
<dbReference type="NCBIfam" id="NF006826">
    <property type="entry name" value="PRK09347.1-3"/>
    <property type="match status" value="1"/>
</dbReference>
<dbReference type="PANTHER" id="PTHR11109:SF7">
    <property type="entry name" value="GTP CYCLOHYDROLASE 1"/>
    <property type="match status" value="1"/>
</dbReference>
<dbReference type="PANTHER" id="PTHR11109">
    <property type="entry name" value="GTP CYCLOHYDROLASE I"/>
    <property type="match status" value="1"/>
</dbReference>
<dbReference type="Pfam" id="PF01227">
    <property type="entry name" value="GTP_cyclohydroI"/>
    <property type="match status" value="1"/>
</dbReference>
<dbReference type="SUPFAM" id="SSF55620">
    <property type="entry name" value="Tetrahydrobiopterin biosynthesis enzymes-like"/>
    <property type="match status" value="1"/>
</dbReference>
<dbReference type="PROSITE" id="PS00859">
    <property type="entry name" value="GTP_CYCLOHYDROL_1_1"/>
    <property type="match status" value="1"/>
</dbReference>
<dbReference type="PROSITE" id="PS00860">
    <property type="entry name" value="GTP_CYCLOHYDROL_1_2"/>
    <property type="match status" value="1"/>
</dbReference>
<reference key="1">
    <citation type="submission" date="1995-05" db="EMBL/GenBank/DDBJ databases">
        <authorList>
            <person name="Witter K."/>
            <person name="Guetlich M."/>
            <person name="Stucka R."/>
            <person name="Ziegler I."/>
            <person name="Bacher A."/>
        </authorList>
    </citation>
    <scope>NUCLEOTIDE SEQUENCE [GENOMIC DNA]</scope>
    <scope>FUNCTION</scope>
    <scope>DISRUPTION PHENOTYPE</scope>
    <source>
        <strain>C836</strain>
    </source>
</reference>
<reference key="2">
    <citation type="journal article" date="1996" name="Biochem. Biophys. Res. Commun.">
        <title>Disruption of the GTP-cyclohydrolase I gene in Saccharomyces cerevisiae.</title>
        <authorList>
            <person name="Nardese V."/>
            <person name="Gutlich M."/>
            <person name="Brambilla A."/>
            <person name="Agostoni Carbone M.L."/>
        </authorList>
    </citation>
    <scope>NUCLEOTIDE SEQUENCE [GENOMIC DNA]</scope>
    <source>
        <strain>ATCC 96604 / S288c / FY1679</strain>
    </source>
</reference>
<reference key="3">
    <citation type="journal article" date="1998" name="Yeast">
        <title>A 9359 bp fragment from the right arm of Saccharomyces cerevisiae chromosome VII includes the FOL2 and YTA7 genes and three unknown open reading frames.</title>
        <authorList>
            <person name="Agostoni Carbone M.L."/>
            <person name="Lucchini G."/>
            <person name="Melchioretto P."/>
            <person name="Nardese V."/>
            <person name="Vanoni M."/>
            <person name="Panzeri L."/>
        </authorList>
    </citation>
    <scope>NUCLEOTIDE SEQUENCE [GENOMIC DNA]</scope>
    <source>
        <strain>ATCC 96604 / S288c / FY1679</strain>
    </source>
</reference>
<reference key="4">
    <citation type="journal article" date="1997" name="Nature">
        <title>The nucleotide sequence of Saccharomyces cerevisiae chromosome VII.</title>
        <authorList>
            <person name="Tettelin H."/>
            <person name="Agostoni-Carbone M.L."/>
            <person name="Albermann K."/>
            <person name="Albers M."/>
            <person name="Arroyo J."/>
            <person name="Backes U."/>
            <person name="Barreiros T."/>
            <person name="Bertani I."/>
            <person name="Bjourson A.J."/>
            <person name="Brueckner M."/>
            <person name="Bruschi C.V."/>
            <person name="Carignani G."/>
            <person name="Castagnoli L."/>
            <person name="Cerdan E."/>
            <person name="Clemente M.L."/>
            <person name="Coblenz A."/>
            <person name="Coglievina M."/>
            <person name="Coissac E."/>
            <person name="Defoor E."/>
            <person name="Del Bino S."/>
            <person name="Delius H."/>
            <person name="Delneri D."/>
            <person name="de Wergifosse P."/>
            <person name="Dujon B."/>
            <person name="Durand P."/>
            <person name="Entian K.-D."/>
            <person name="Eraso P."/>
            <person name="Escribano V."/>
            <person name="Fabiani L."/>
            <person name="Fartmann B."/>
            <person name="Feroli F."/>
            <person name="Feuermann M."/>
            <person name="Frontali L."/>
            <person name="Garcia-Gonzalez M."/>
            <person name="Garcia-Saez M.I."/>
            <person name="Goffeau A."/>
            <person name="Guerreiro P."/>
            <person name="Hani J."/>
            <person name="Hansen M."/>
            <person name="Hebling U."/>
            <person name="Hernandez K."/>
            <person name="Heumann K."/>
            <person name="Hilger F."/>
            <person name="Hofmann B."/>
            <person name="Indge K.J."/>
            <person name="James C.M."/>
            <person name="Klima R."/>
            <person name="Koetter P."/>
            <person name="Kramer B."/>
            <person name="Kramer W."/>
            <person name="Lauquin G."/>
            <person name="Leuther H."/>
            <person name="Louis E.J."/>
            <person name="Maillier E."/>
            <person name="Marconi A."/>
            <person name="Martegani E."/>
            <person name="Mazon M.J."/>
            <person name="Mazzoni C."/>
            <person name="McReynolds A.D.K."/>
            <person name="Melchioretto P."/>
            <person name="Mewes H.-W."/>
            <person name="Minenkova O."/>
            <person name="Mueller-Auer S."/>
            <person name="Nawrocki A."/>
            <person name="Netter P."/>
            <person name="Neu R."/>
            <person name="Nombela C."/>
            <person name="Oliver S.G."/>
            <person name="Panzeri L."/>
            <person name="Paoluzi S."/>
            <person name="Plevani P."/>
            <person name="Portetelle D."/>
            <person name="Portillo F."/>
            <person name="Potier S."/>
            <person name="Purnelle B."/>
            <person name="Rieger M."/>
            <person name="Riles L."/>
            <person name="Rinaldi T."/>
            <person name="Robben J."/>
            <person name="Rodrigues-Pousada C."/>
            <person name="Rodriguez-Belmonte E."/>
            <person name="Rodriguez-Torres A.M."/>
            <person name="Rose M."/>
            <person name="Ruzzi M."/>
            <person name="Saliola M."/>
            <person name="Sanchez-Perez M."/>
            <person name="Schaefer B."/>
            <person name="Schaefer M."/>
            <person name="Scharfe M."/>
            <person name="Schmidheini T."/>
            <person name="Schreer A."/>
            <person name="Skala J."/>
            <person name="Souciet J.-L."/>
            <person name="Steensma H.Y."/>
            <person name="Talla E."/>
            <person name="Thierry A."/>
            <person name="Vandenbol M."/>
            <person name="van der Aart Q.J.M."/>
            <person name="Van Dyck L."/>
            <person name="Vanoni M."/>
            <person name="Verhasselt P."/>
            <person name="Voet M."/>
            <person name="Volckaert G."/>
            <person name="Wambutt R."/>
            <person name="Watson M.D."/>
            <person name="Weber N."/>
            <person name="Wedler E."/>
            <person name="Wedler H."/>
            <person name="Wipfli P."/>
            <person name="Wolf K."/>
            <person name="Wright L.F."/>
            <person name="Zaccaria P."/>
            <person name="Zimmermann M."/>
            <person name="Zollner A."/>
            <person name="Kleine K."/>
        </authorList>
    </citation>
    <scope>NUCLEOTIDE SEQUENCE [LARGE SCALE GENOMIC DNA]</scope>
    <source>
        <strain>ATCC 204508 / S288c</strain>
    </source>
</reference>
<reference key="5">
    <citation type="journal article" date="2014" name="G3 (Bethesda)">
        <title>The reference genome sequence of Saccharomyces cerevisiae: Then and now.</title>
        <authorList>
            <person name="Engel S.R."/>
            <person name="Dietrich F.S."/>
            <person name="Fisk D.G."/>
            <person name="Binkley G."/>
            <person name="Balakrishnan R."/>
            <person name="Costanzo M.C."/>
            <person name="Dwight S.S."/>
            <person name="Hitz B.C."/>
            <person name="Karra K."/>
            <person name="Nash R.S."/>
            <person name="Weng S."/>
            <person name="Wong E.D."/>
            <person name="Lloyd P."/>
            <person name="Skrzypek M.S."/>
            <person name="Miyasato S.R."/>
            <person name="Simison M."/>
            <person name="Cherry J.M."/>
        </authorList>
    </citation>
    <scope>GENOME REANNOTATION</scope>
    <source>
        <strain>ATCC 204508 / S288c</strain>
    </source>
</reference>
<reference key="6">
    <citation type="journal article" date="2007" name="Genome Res.">
        <title>Approaching a complete repository of sequence-verified protein-encoding clones for Saccharomyces cerevisiae.</title>
        <authorList>
            <person name="Hu Y."/>
            <person name="Rolfs A."/>
            <person name="Bhullar B."/>
            <person name="Murthy T.V.S."/>
            <person name="Zhu C."/>
            <person name="Berger M.F."/>
            <person name="Camargo A.A."/>
            <person name="Kelley F."/>
            <person name="McCarron S."/>
            <person name="Jepson D."/>
            <person name="Richardson A."/>
            <person name="Raphael J."/>
            <person name="Moreira D."/>
            <person name="Taycher E."/>
            <person name="Zuo D."/>
            <person name="Mohr S."/>
            <person name="Kane M.F."/>
            <person name="Williamson J."/>
            <person name="Simpson A.J.G."/>
            <person name="Bulyk M.L."/>
            <person name="Harlow E."/>
            <person name="Marsischky G."/>
            <person name="Kolodner R.D."/>
            <person name="LaBaer J."/>
        </authorList>
    </citation>
    <scope>NUCLEOTIDE SEQUENCE [GENOMIC DNA]</scope>
    <source>
        <strain>ATCC 204508 / S288c</strain>
    </source>
</reference>
<reference key="7">
    <citation type="journal article" date="1995" name="Biochem. Biophys. Res. Commun.">
        <title>Homology cloning of GTP-cyclohydrolase I from various unrelated eukaryotes by reverse-transcription polymerase chain reaction using a general set of degenerate primers.</title>
        <authorList>
            <person name="Maier J."/>
            <person name="Witter K."/>
            <person name="Guetlich M."/>
            <person name="Ziegler I."/>
            <person name="Werner T."/>
            <person name="Ninnemann H."/>
        </authorList>
    </citation>
    <scope>NUCLEOTIDE SEQUENCE [MRNA] OF 115-208</scope>
    <source>
        <strain>ATCC 204508 / S288c</strain>
    </source>
</reference>
<reference key="8">
    <citation type="journal article" date="2003" name="Nature">
        <title>Global analysis of protein expression in yeast.</title>
        <authorList>
            <person name="Ghaemmaghami S."/>
            <person name="Huh W.-K."/>
            <person name="Bower K."/>
            <person name="Howson R.W."/>
            <person name="Belle A."/>
            <person name="Dephoure N."/>
            <person name="O'Shea E.K."/>
            <person name="Weissman J.S."/>
        </authorList>
    </citation>
    <scope>LEVEL OF PROTEIN EXPRESSION [LARGE SCALE ANALYSIS]</scope>
</reference>
<reference key="9">
    <citation type="journal article" date="2007" name="J. Proteome Res.">
        <title>Large-scale phosphorylation analysis of alpha-factor-arrested Saccharomyces cerevisiae.</title>
        <authorList>
            <person name="Li X."/>
            <person name="Gerber S.A."/>
            <person name="Rudner A.D."/>
            <person name="Beausoleil S.A."/>
            <person name="Haas W."/>
            <person name="Villen J."/>
            <person name="Elias J.E."/>
            <person name="Gygi S.P."/>
        </authorList>
    </citation>
    <scope>PHOSPHORYLATION [LARGE SCALE ANALYSIS] AT THR-15 AND SER-23</scope>
    <scope>IDENTIFICATION BY MASS SPECTROMETRY [LARGE SCALE ANALYSIS]</scope>
    <source>
        <strain>ADR376</strain>
    </source>
</reference>
<reference key="10">
    <citation type="journal article" date="2008" name="Mol. Cell. Proteomics">
        <title>A multidimensional chromatography technology for in-depth phosphoproteome analysis.</title>
        <authorList>
            <person name="Albuquerque C.P."/>
            <person name="Smolka M.B."/>
            <person name="Payne S.H."/>
            <person name="Bafna V."/>
            <person name="Eng J."/>
            <person name="Zhou H."/>
        </authorList>
    </citation>
    <scope>PHOSPHORYLATION [LARGE SCALE ANALYSIS] AT THR-15</scope>
    <scope>IDENTIFICATION BY MASS SPECTROMETRY [LARGE SCALE ANALYSIS]</scope>
</reference>
<reference key="11">
    <citation type="journal article" date="2009" name="Science">
        <title>Global analysis of Cdk1 substrate phosphorylation sites provides insights into evolution.</title>
        <authorList>
            <person name="Holt L.J."/>
            <person name="Tuch B.B."/>
            <person name="Villen J."/>
            <person name="Johnson A.D."/>
            <person name="Gygi S.P."/>
            <person name="Morgan D.O."/>
        </authorList>
    </citation>
    <scope>PHOSPHORYLATION [LARGE SCALE ANALYSIS] AT THR-15 AND SER-23</scope>
    <scope>IDENTIFICATION BY MASS SPECTROMETRY [LARGE SCALE ANALYSIS]</scope>
</reference>
<reference key="12">
    <citation type="journal article" date="2012" name="Proc. Natl. Acad. Sci. U.S.A.">
        <title>N-terminal acetylome analyses and functional insights of the N-terminal acetyltransferase NatB.</title>
        <authorList>
            <person name="Van Damme P."/>
            <person name="Lasa M."/>
            <person name="Polevoda B."/>
            <person name="Gazquez C."/>
            <person name="Elosegui-Artola A."/>
            <person name="Kim D.S."/>
            <person name="De Juan-Pardo E."/>
            <person name="Demeyer K."/>
            <person name="Hole K."/>
            <person name="Larrea E."/>
            <person name="Timmerman E."/>
            <person name="Prieto J."/>
            <person name="Arnesen T."/>
            <person name="Sherman F."/>
            <person name="Gevaert K."/>
            <person name="Aldabe R."/>
        </authorList>
    </citation>
    <scope>IDENTIFICATION BY MASS SPECTROMETRY [LARGE SCALE ANALYSIS]</scope>
</reference>
<evidence type="ECO:0000250" key="1">
    <source>
        <dbReference type="UniProtKB" id="P30793"/>
    </source>
</evidence>
<evidence type="ECO:0000250" key="2">
    <source>
        <dbReference type="UniProtKB" id="Q8VYU3"/>
    </source>
</evidence>
<evidence type="ECO:0000256" key="3">
    <source>
        <dbReference type="SAM" id="MobiDB-lite"/>
    </source>
</evidence>
<evidence type="ECO:0000269" key="4">
    <source>
    </source>
</evidence>
<evidence type="ECO:0000269" key="5">
    <source ref="1"/>
</evidence>
<evidence type="ECO:0000303" key="6">
    <source ref="1"/>
</evidence>
<evidence type="ECO:0000305" key="7"/>
<evidence type="ECO:0000305" key="8">
    <source ref="1"/>
</evidence>
<evidence type="ECO:0007744" key="9">
    <source>
    </source>
</evidence>
<evidence type="ECO:0007744" key="10">
    <source>
    </source>
</evidence>
<evidence type="ECO:0007744" key="11">
    <source>
    </source>
</evidence>
<feature type="chain" id="PRO_0000119489" description="GTP cyclohydrolase 1">
    <location>
        <begin position="1"/>
        <end position="243"/>
    </location>
</feature>
<feature type="region of interest" description="Disordered" evidence="3">
    <location>
        <begin position="18"/>
        <end position="55"/>
    </location>
</feature>
<feature type="binding site" evidence="1">
    <location>
        <position position="132"/>
    </location>
    <ligand>
        <name>Zn(2+)</name>
        <dbReference type="ChEBI" id="CHEBI:29105"/>
    </ligand>
</feature>
<feature type="binding site" evidence="1">
    <location>
        <position position="135"/>
    </location>
    <ligand>
        <name>Zn(2+)</name>
        <dbReference type="ChEBI" id="CHEBI:29105"/>
    </ligand>
</feature>
<feature type="binding site" evidence="1">
    <location>
        <position position="203"/>
    </location>
    <ligand>
        <name>Zn(2+)</name>
        <dbReference type="ChEBI" id="CHEBI:29105"/>
    </ligand>
</feature>
<feature type="modified residue" description="Phosphothreonine" evidence="9 10 11">
    <location>
        <position position="15"/>
    </location>
</feature>
<feature type="modified residue" description="Phosphoserine" evidence="9 11">
    <location>
        <position position="23"/>
    </location>
</feature>
<feature type="sequence conflict" description="In Ref. 7; CAA89826." evidence="7" ref="7">
    <original>LA</original>
    <variation>QG</variation>
    <location>
        <begin position="159"/>
        <end position="160"/>
    </location>
</feature>
<feature type="sequence conflict" description="In Ref. 7; CAA89826." evidence="7" ref="7">
    <original>S</original>
    <variation>M</variation>
    <location>
        <position position="206"/>
    </location>
</feature>
<feature type="sequence conflict" description="In Ref. 1; CAA87397." evidence="7" ref="1">
    <original>V</original>
    <variation>A</variation>
    <location>
        <position position="217"/>
    </location>
</feature>
<proteinExistence type="evidence at protein level"/>
<organism>
    <name type="scientific">Saccharomyces cerevisiae (strain ATCC 204508 / S288c)</name>
    <name type="common">Baker's yeast</name>
    <dbReference type="NCBI Taxonomy" id="559292"/>
    <lineage>
        <taxon>Eukaryota</taxon>
        <taxon>Fungi</taxon>
        <taxon>Dikarya</taxon>
        <taxon>Ascomycota</taxon>
        <taxon>Saccharomycotina</taxon>
        <taxon>Saccharomycetes</taxon>
        <taxon>Saccharomycetales</taxon>
        <taxon>Saccharomycetaceae</taxon>
        <taxon>Saccharomyces</taxon>
    </lineage>
</organism>
<sequence length="243" mass="27769">MHNIQLVQEIERHETPLNIRPTSPYTLNPPVERDGFSWPSVGTRQRAEETEEEEKERIQRISGAIKTILTELGEDVNREGLLDTPQRYAKAMLYFTKGYQTNIMDDVIKNAVFEEDHDEMVIVRDIEIYSLCEHHLVPFFGKVHIGYIPNKKVIGLSKLARLAEMYARRLQVQERLTKQIAMALSDILKPLGVAVVMEASHMCMVSRGIQKTGSSTVTSCMLGGFRAHKTREEFLTLLGRRSI</sequence>
<comment type="function">
    <text evidence="5">GTP cyclohydrolase 1 is the first enzyme in the biosynthetic pathway leading to folic acid.</text>
</comment>
<comment type="catalytic activity">
    <reaction evidence="8">
        <text>GTP + H2O = 7,8-dihydroneopterin 3'-triphosphate + formate + H(+)</text>
        <dbReference type="Rhea" id="RHEA:17473"/>
        <dbReference type="ChEBI" id="CHEBI:15377"/>
        <dbReference type="ChEBI" id="CHEBI:15378"/>
        <dbReference type="ChEBI" id="CHEBI:15740"/>
        <dbReference type="ChEBI" id="CHEBI:37565"/>
        <dbReference type="ChEBI" id="CHEBI:58462"/>
        <dbReference type="EC" id="3.5.4.16"/>
    </reaction>
</comment>
<comment type="pathway">
    <text evidence="8">Cofactor biosynthesis; 7,8-dihydroneopterin triphosphate biosynthesis; 7,8-dihydroneopterin triphosphate from GTP: step 1/1.</text>
</comment>
<comment type="subunit">
    <text evidence="2">Homodimer.</text>
</comment>
<comment type="disruption phenotype">
    <text evidence="5">Leads to folinic acid auxotrophy, and lacks any detectable specific enzymatic activity.</text>
</comment>
<comment type="miscellaneous">
    <text evidence="4">Present with 2840 molecules/cell in log phase SD medium.</text>
</comment>
<comment type="similarity">
    <text evidence="7">Belongs to the GTP cyclohydrolase I family.</text>
</comment>
<accession>P51601</accession>
<accession>D6VV45</accession>
<protein>
    <recommendedName>
        <fullName evidence="6">GTP cyclohydrolase 1</fullName>
        <ecNumber evidence="8">3.5.4.16</ecNumber>
    </recommendedName>
    <alternativeName>
        <fullName evidence="6">GTP cyclohydrolase I</fullName>
        <shortName evidence="6">GTP-CH-I</shortName>
    </alternativeName>
</protein>
<gene>
    <name evidence="6" type="primary">FOL2</name>
    <name type="ordered locus">YGR267C</name>
    <name type="ORF">G9349</name>
</gene>
<name>GCH1_YEAST</name>